<comment type="function">
    <text evidence="1">Promotes RNA polymerase assembly. Latches the N- and C-terminal regions of the beta' subunit thereby facilitating its interaction with the beta and alpha subunits.</text>
</comment>
<comment type="catalytic activity">
    <reaction evidence="1">
        <text>RNA(n) + a ribonucleoside 5'-triphosphate = RNA(n+1) + diphosphate</text>
        <dbReference type="Rhea" id="RHEA:21248"/>
        <dbReference type="Rhea" id="RHEA-COMP:14527"/>
        <dbReference type="Rhea" id="RHEA-COMP:17342"/>
        <dbReference type="ChEBI" id="CHEBI:33019"/>
        <dbReference type="ChEBI" id="CHEBI:61557"/>
        <dbReference type="ChEBI" id="CHEBI:140395"/>
        <dbReference type="EC" id="2.7.7.6"/>
    </reaction>
</comment>
<comment type="subunit">
    <text evidence="1">The RNAP catalytic core consists of 2 alpha, 1 beta, 1 beta' and 1 omega subunit. When a sigma factor is associated with the core the holoenzyme is formed, which can initiate transcription.</text>
</comment>
<comment type="similarity">
    <text evidence="1">Belongs to the RNA polymerase subunit omega family.</text>
</comment>
<reference key="1">
    <citation type="submission" date="2009-02" db="EMBL/GenBank/DDBJ databases">
        <title>Genome sequence of Bacillus cereus 03BB102.</title>
        <authorList>
            <person name="Dodson R.J."/>
            <person name="Jackson P."/>
            <person name="Munk A.C."/>
            <person name="Brettin T."/>
            <person name="Bruce D."/>
            <person name="Detter C."/>
            <person name="Tapia R."/>
            <person name="Han C."/>
            <person name="Sutton G."/>
            <person name="Sims D."/>
        </authorList>
    </citation>
    <scope>NUCLEOTIDE SEQUENCE [LARGE SCALE GENOMIC DNA]</scope>
    <source>
        <strain>03BB102</strain>
    </source>
</reference>
<keyword id="KW-0240">DNA-directed RNA polymerase</keyword>
<keyword id="KW-0548">Nucleotidyltransferase</keyword>
<keyword id="KW-0804">Transcription</keyword>
<keyword id="KW-0808">Transferase</keyword>
<sequence>MLNPSIDSLLTKIDSKYTLVTVAAKRAREMQLANNCVVEKPVSHKCVGKALEEIDMEALSYVPSEDKVTE</sequence>
<evidence type="ECO:0000255" key="1">
    <source>
        <dbReference type="HAMAP-Rule" id="MF_00366"/>
    </source>
</evidence>
<gene>
    <name evidence="1" type="primary">rpoZ</name>
    <name type="ordered locus">BCA_3970</name>
</gene>
<organism>
    <name type="scientific">Bacillus cereus (strain 03BB102)</name>
    <dbReference type="NCBI Taxonomy" id="572264"/>
    <lineage>
        <taxon>Bacteria</taxon>
        <taxon>Bacillati</taxon>
        <taxon>Bacillota</taxon>
        <taxon>Bacilli</taxon>
        <taxon>Bacillales</taxon>
        <taxon>Bacillaceae</taxon>
        <taxon>Bacillus</taxon>
        <taxon>Bacillus cereus group</taxon>
    </lineage>
</organism>
<dbReference type="EC" id="2.7.7.6" evidence="1"/>
<dbReference type="EMBL" id="CP001407">
    <property type="protein sequence ID" value="ACO28719.1"/>
    <property type="molecule type" value="Genomic_DNA"/>
</dbReference>
<dbReference type="RefSeq" id="WP_000933970.1">
    <property type="nucleotide sequence ID" value="NZ_CP009318.1"/>
</dbReference>
<dbReference type="SMR" id="C1EP94"/>
<dbReference type="GeneID" id="75087006"/>
<dbReference type="KEGG" id="bcx:BCA_3970"/>
<dbReference type="PATRIC" id="fig|572264.18.peg.3926"/>
<dbReference type="Proteomes" id="UP000002210">
    <property type="component" value="Chromosome"/>
</dbReference>
<dbReference type="GO" id="GO:0000428">
    <property type="term" value="C:DNA-directed RNA polymerase complex"/>
    <property type="evidence" value="ECO:0007669"/>
    <property type="project" value="UniProtKB-KW"/>
</dbReference>
<dbReference type="GO" id="GO:0003677">
    <property type="term" value="F:DNA binding"/>
    <property type="evidence" value="ECO:0007669"/>
    <property type="project" value="UniProtKB-UniRule"/>
</dbReference>
<dbReference type="GO" id="GO:0003899">
    <property type="term" value="F:DNA-directed RNA polymerase activity"/>
    <property type="evidence" value="ECO:0007669"/>
    <property type="project" value="UniProtKB-UniRule"/>
</dbReference>
<dbReference type="GO" id="GO:0006351">
    <property type="term" value="P:DNA-templated transcription"/>
    <property type="evidence" value="ECO:0007669"/>
    <property type="project" value="UniProtKB-UniRule"/>
</dbReference>
<dbReference type="Gene3D" id="3.90.940.10">
    <property type="match status" value="1"/>
</dbReference>
<dbReference type="HAMAP" id="MF_00366">
    <property type="entry name" value="RNApol_bact_RpoZ"/>
    <property type="match status" value="1"/>
</dbReference>
<dbReference type="InterPro" id="IPR003716">
    <property type="entry name" value="DNA-dir_RNA_pol_omega"/>
</dbReference>
<dbReference type="InterPro" id="IPR006110">
    <property type="entry name" value="Pol_omega/Rpo6/RPB6"/>
</dbReference>
<dbReference type="InterPro" id="IPR036161">
    <property type="entry name" value="RPB6/omega-like_sf"/>
</dbReference>
<dbReference type="NCBIfam" id="TIGR00690">
    <property type="entry name" value="rpoZ"/>
    <property type="match status" value="1"/>
</dbReference>
<dbReference type="PANTHER" id="PTHR34476">
    <property type="entry name" value="DNA-DIRECTED RNA POLYMERASE SUBUNIT OMEGA"/>
    <property type="match status" value="1"/>
</dbReference>
<dbReference type="PANTHER" id="PTHR34476:SF1">
    <property type="entry name" value="DNA-DIRECTED RNA POLYMERASE SUBUNIT OMEGA"/>
    <property type="match status" value="1"/>
</dbReference>
<dbReference type="Pfam" id="PF01192">
    <property type="entry name" value="RNA_pol_Rpb6"/>
    <property type="match status" value="1"/>
</dbReference>
<dbReference type="SMART" id="SM01409">
    <property type="entry name" value="RNA_pol_Rpb6"/>
    <property type="match status" value="1"/>
</dbReference>
<dbReference type="SUPFAM" id="SSF63562">
    <property type="entry name" value="RPB6/omega subunit-like"/>
    <property type="match status" value="1"/>
</dbReference>
<protein>
    <recommendedName>
        <fullName evidence="1">DNA-directed RNA polymerase subunit omega</fullName>
        <shortName evidence="1">RNAP omega subunit</shortName>
        <ecNumber evidence="1">2.7.7.6</ecNumber>
    </recommendedName>
    <alternativeName>
        <fullName evidence="1">RNA polymerase omega subunit</fullName>
    </alternativeName>
    <alternativeName>
        <fullName evidence="1">Transcriptase subunit omega</fullName>
    </alternativeName>
</protein>
<proteinExistence type="inferred from homology"/>
<name>RPOZ_BACC3</name>
<feature type="chain" id="PRO_1000133717" description="DNA-directed RNA polymerase subunit omega">
    <location>
        <begin position="1"/>
        <end position="70"/>
    </location>
</feature>
<accession>C1EP94</accession>